<proteinExistence type="evidence at protein level"/>
<keyword id="KW-0001">2Fe-2S</keyword>
<keyword id="KW-0002">3D-structure</keyword>
<keyword id="KW-0997">Cell inner membrane</keyword>
<keyword id="KW-1003">Cell membrane</keyword>
<keyword id="KW-0274">FAD</keyword>
<keyword id="KW-0285">Flavoprotein</keyword>
<keyword id="KW-0406">Ion transport</keyword>
<keyword id="KW-0408">Iron</keyword>
<keyword id="KW-0411">Iron-sulfur</keyword>
<keyword id="KW-0472">Membrane</keyword>
<keyword id="KW-0479">Metal-binding</keyword>
<keyword id="KW-0520">NAD</keyword>
<keyword id="KW-0915">Sodium</keyword>
<keyword id="KW-0739">Sodium transport</keyword>
<keyword id="KW-1278">Translocase</keyword>
<keyword id="KW-0812">Transmembrane</keyword>
<keyword id="KW-1133">Transmembrane helix</keyword>
<keyword id="KW-0813">Transport</keyword>
<keyword id="KW-0830">Ubiquinone</keyword>
<reference key="1">
    <citation type="submission" date="2006-09" db="EMBL/GenBank/DDBJ databases">
        <authorList>
            <consortium name="The Klebsiella pneumonia Genome Sequencing Project"/>
            <person name="McClelland M."/>
            <person name="Sanderson E.K."/>
            <person name="Spieth J."/>
            <person name="Clifton W.S."/>
            <person name="Latreille P."/>
            <person name="Sabo A."/>
            <person name="Pepin K."/>
            <person name="Bhonagiri V."/>
            <person name="Porwollik S."/>
            <person name="Ali J."/>
            <person name="Wilson R.K."/>
        </authorList>
    </citation>
    <scope>NUCLEOTIDE SEQUENCE [LARGE SCALE GENOMIC DNA]</scope>
    <source>
        <strain>ATCC 700721 / MGH 78578</strain>
    </source>
</reference>
<sequence length="407" mass="45282">MEIILGVVMFTLIVLVLSGLILAARSKLVNAGDVVIEINNEADKQIRTPAGDKLLNTLSSNGIFVSSACGGGGSCGQCRVTVKEGGGDILPTELSHITKRDAKAGCRLACQVAVKQNMKIELPEEIFGVKKWECEVISNDNKATFIKELKLRIPEGEVVPFRAGGYIQIECPPHKVAYADFDVPDEYRSDWDKFNLFRYVSEVKEPTLRAYSMANYPEEKGIIMLNVRIATPPPKVPDAPPGIMSSYIWSLKPGDKVTISGPFGEFFAKETDAEMVFIGGGAGMAPMRSHIFDQLKRLHSTRKISFWYGARSLREMFYDEEFEQLARDNPNFTFHVALSDPLPEDNWTGHTGFIHNVLYENYLRDHPAPEDCEFYMCGPPVMNAAVIKMLKDLGVEDENILLDDFGG</sequence>
<gene>
    <name evidence="1" type="primary">nqrF</name>
    <name type="ordered locus">KPN78578_02360</name>
    <name type="ORF">KPN_00244</name>
</gene>
<dbReference type="EC" id="7.2.1.1" evidence="1"/>
<dbReference type="EMBL" id="CP000647">
    <property type="protein sequence ID" value="ABR75697.1"/>
    <property type="molecule type" value="Genomic_DNA"/>
</dbReference>
<dbReference type="RefSeq" id="WP_002889720.1">
    <property type="nucleotide sequence ID" value="NC_009648.1"/>
</dbReference>
<dbReference type="PDB" id="7QTY">
    <property type="method" value="X-ray"/>
    <property type="resolution" value="1.69 A"/>
    <property type="chains" value="A=129-407"/>
</dbReference>
<dbReference type="PDB" id="7QU0">
    <property type="method" value="X-ray"/>
    <property type="resolution" value="1.62 A"/>
    <property type="chains" value="A=129-407"/>
</dbReference>
<dbReference type="PDBsum" id="7QTY"/>
<dbReference type="PDBsum" id="7QU0"/>
<dbReference type="SMR" id="A6T526"/>
<dbReference type="STRING" id="272620.KPN_00244"/>
<dbReference type="jPOST" id="A6T526"/>
<dbReference type="PaxDb" id="272620-KPN_00244"/>
<dbReference type="EnsemblBacteria" id="ABR75697">
    <property type="protein sequence ID" value="ABR75697"/>
    <property type="gene ID" value="KPN_00244"/>
</dbReference>
<dbReference type="KEGG" id="kpn:KPN_00244"/>
<dbReference type="HOGENOM" id="CLU_003827_7_2_6"/>
<dbReference type="Proteomes" id="UP000000265">
    <property type="component" value="Chromosome"/>
</dbReference>
<dbReference type="GO" id="GO:0005886">
    <property type="term" value="C:plasma membrane"/>
    <property type="evidence" value="ECO:0007669"/>
    <property type="project" value="UniProtKB-SubCell"/>
</dbReference>
<dbReference type="GO" id="GO:0051537">
    <property type="term" value="F:2 iron, 2 sulfur cluster binding"/>
    <property type="evidence" value="ECO:0007669"/>
    <property type="project" value="UniProtKB-KW"/>
</dbReference>
<dbReference type="GO" id="GO:0009055">
    <property type="term" value="F:electron transfer activity"/>
    <property type="evidence" value="ECO:0007669"/>
    <property type="project" value="UniProtKB-UniRule"/>
</dbReference>
<dbReference type="GO" id="GO:0046872">
    <property type="term" value="F:metal ion binding"/>
    <property type="evidence" value="ECO:0007669"/>
    <property type="project" value="UniProtKB-KW"/>
</dbReference>
<dbReference type="GO" id="GO:0016655">
    <property type="term" value="F:oxidoreductase activity, acting on NAD(P)H, quinone or similar compound as acceptor"/>
    <property type="evidence" value="ECO:0007669"/>
    <property type="project" value="InterPro"/>
</dbReference>
<dbReference type="GO" id="GO:0006814">
    <property type="term" value="P:sodium ion transport"/>
    <property type="evidence" value="ECO:0007669"/>
    <property type="project" value="UniProtKB-UniRule"/>
</dbReference>
<dbReference type="CDD" id="cd06188">
    <property type="entry name" value="NADH_quinone_reductase"/>
    <property type="match status" value="1"/>
</dbReference>
<dbReference type="FunFam" id="2.40.30.10:FF:000064">
    <property type="entry name" value="Na(+)-translocating NADH-quinone reductase subunit F"/>
    <property type="match status" value="1"/>
</dbReference>
<dbReference type="FunFam" id="3.40.50.80:FF:000014">
    <property type="entry name" value="Na(+)-translocating NADH-quinone reductase subunit F"/>
    <property type="match status" value="1"/>
</dbReference>
<dbReference type="Gene3D" id="3.10.20.30">
    <property type="match status" value="1"/>
</dbReference>
<dbReference type="Gene3D" id="3.40.50.80">
    <property type="entry name" value="Nucleotide-binding domain of ferredoxin-NADP reductase (FNR) module"/>
    <property type="match status" value="1"/>
</dbReference>
<dbReference type="Gene3D" id="2.40.30.10">
    <property type="entry name" value="Translation factors"/>
    <property type="match status" value="1"/>
</dbReference>
<dbReference type="HAMAP" id="MF_00430">
    <property type="entry name" value="NqrF"/>
    <property type="match status" value="1"/>
</dbReference>
<dbReference type="InterPro" id="IPR036010">
    <property type="entry name" value="2Fe-2S_ferredoxin-like_sf"/>
</dbReference>
<dbReference type="InterPro" id="IPR001041">
    <property type="entry name" value="2Fe-2S_ferredoxin-type"/>
</dbReference>
<dbReference type="InterPro" id="IPR012675">
    <property type="entry name" value="Beta-grasp_dom_sf"/>
</dbReference>
<dbReference type="InterPro" id="IPR008333">
    <property type="entry name" value="Cbr1-like_FAD-bd_dom"/>
</dbReference>
<dbReference type="InterPro" id="IPR017927">
    <property type="entry name" value="FAD-bd_FR_type"/>
</dbReference>
<dbReference type="InterPro" id="IPR001709">
    <property type="entry name" value="Flavoprot_Pyr_Nucl_cyt_Rdtase"/>
</dbReference>
<dbReference type="InterPro" id="IPR039261">
    <property type="entry name" value="FNR_nucleotide-bd"/>
</dbReference>
<dbReference type="InterPro" id="IPR010205">
    <property type="entry name" value="NqrF"/>
</dbReference>
<dbReference type="InterPro" id="IPR001433">
    <property type="entry name" value="OxRdtase_FAD/NAD-bd"/>
</dbReference>
<dbReference type="InterPro" id="IPR017938">
    <property type="entry name" value="Riboflavin_synthase-like_b-brl"/>
</dbReference>
<dbReference type="NCBIfam" id="TIGR01941">
    <property type="entry name" value="nqrF"/>
    <property type="match status" value="1"/>
</dbReference>
<dbReference type="PANTHER" id="PTHR43644">
    <property type="entry name" value="NA(+)-TRANSLOCATING NADH-QUINONE REDUCTASE SUBUNIT"/>
    <property type="match status" value="1"/>
</dbReference>
<dbReference type="PANTHER" id="PTHR43644:SF1">
    <property type="entry name" value="NAD(P)H-FLAVIN REDUCTASE"/>
    <property type="match status" value="1"/>
</dbReference>
<dbReference type="Pfam" id="PF00970">
    <property type="entry name" value="FAD_binding_6"/>
    <property type="match status" value="1"/>
</dbReference>
<dbReference type="Pfam" id="PF00111">
    <property type="entry name" value="Fer2"/>
    <property type="match status" value="1"/>
</dbReference>
<dbReference type="Pfam" id="PF00175">
    <property type="entry name" value="NAD_binding_1"/>
    <property type="match status" value="1"/>
</dbReference>
<dbReference type="PIRSF" id="PIRSF000044">
    <property type="entry name" value="Cis_Diol_DH_RD"/>
    <property type="match status" value="1"/>
</dbReference>
<dbReference type="PRINTS" id="PR00371">
    <property type="entry name" value="FPNCR"/>
</dbReference>
<dbReference type="SUPFAM" id="SSF54292">
    <property type="entry name" value="2Fe-2S ferredoxin-like"/>
    <property type="match status" value="1"/>
</dbReference>
<dbReference type="SUPFAM" id="SSF52343">
    <property type="entry name" value="Ferredoxin reductase-like, C-terminal NADP-linked domain"/>
    <property type="match status" value="1"/>
</dbReference>
<dbReference type="SUPFAM" id="SSF63380">
    <property type="entry name" value="Riboflavin synthase domain-like"/>
    <property type="match status" value="1"/>
</dbReference>
<dbReference type="PROSITE" id="PS51085">
    <property type="entry name" value="2FE2S_FER_2"/>
    <property type="match status" value="1"/>
</dbReference>
<dbReference type="PROSITE" id="PS51384">
    <property type="entry name" value="FAD_FR"/>
    <property type="match status" value="1"/>
</dbReference>
<name>NQRF_KLEP7</name>
<comment type="function">
    <text evidence="1">NQR complex catalyzes the reduction of ubiquinone-1 to ubiquinol by two successive reactions, coupled with the transport of Na(+) ions from the cytoplasm to the periplasm. The first step is catalyzed by NqrF, which accepts electrons from NADH and reduces ubiquinone-1 to ubisemiquinone by a one-electron transfer pathway.</text>
</comment>
<comment type="catalytic activity">
    <reaction evidence="1">
        <text>a ubiquinone + n Na(+)(in) + NADH + H(+) = a ubiquinol + n Na(+)(out) + NAD(+)</text>
        <dbReference type="Rhea" id="RHEA:47748"/>
        <dbReference type="Rhea" id="RHEA-COMP:9565"/>
        <dbReference type="Rhea" id="RHEA-COMP:9566"/>
        <dbReference type="ChEBI" id="CHEBI:15378"/>
        <dbReference type="ChEBI" id="CHEBI:16389"/>
        <dbReference type="ChEBI" id="CHEBI:17976"/>
        <dbReference type="ChEBI" id="CHEBI:29101"/>
        <dbReference type="ChEBI" id="CHEBI:57540"/>
        <dbReference type="ChEBI" id="CHEBI:57945"/>
        <dbReference type="EC" id="7.2.1.1"/>
    </reaction>
</comment>
<comment type="cofactor">
    <cofactor evidence="1">
        <name>[2Fe-2S] cluster</name>
        <dbReference type="ChEBI" id="CHEBI:190135"/>
    </cofactor>
    <text evidence="1">Binds 1 [2Fe-2S] cluster.</text>
</comment>
<comment type="cofactor">
    <cofactor evidence="1">
        <name>FAD</name>
        <dbReference type="ChEBI" id="CHEBI:57692"/>
    </cofactor>
</comment>
<comment type="subunit">
    <text evidence="1">Composed of six subunits; NqrA, NqrB, NqrC, NqrD, NqrE and NqrF.</text>
</comment>
<comment type="subcellular location">
    <subcellularLocation>
        <location evidence="1">Cell inner membrane</location>
        <topology evidence="1">Single-pass membrane protein</topology>
    </subcellularLocation>
</comment>
<comment type="similarity">
    <text evidence="1">Belongs to the NqrF family.</text>
</comment>
<accession>A6T526</accession>
<protein>
    <recommendedName>
        <fullName evidence="1">Na(+)-translocating NADH-quinone reductase subunit F</fullName>
        <shortName evidence="1">Na(+)-NQR subunit F</shortName>
        <shortName evidence="1">Na(+)-translocating NQR subunit F</shortName>
        <ecNumber evidence="1">7.2.1.1</ecNumber>
    </recommendedName>
    <alternativeName>
        <fullName evidence="1">NQR complex subunit F</fullName>
    </alternativeName>
    <alternativeName>
        <fullName evidence="1">NQR-1 subunit F</fullName>
    </alternativeName>
</protein>
<evidence type="ECO:0000255" key="1">
    <source>
        <dbReference type="HAMAP-Rule" id="MF_00430"/>
    </source>
</evidence>
<evidence type="ECO:0007829" key="2">
    <source>
        <dbReference type="PDB" id="7QU0"/>
    </source>
</evidence>
<organism>
    <name type="scientific">Klebsiella pneumoniae subsp. pneumoniae (strain ATCC 700721 / MGH 78578)</name>
    <dbReference type="NCBI Taxonomy" id="272620"/>
    <lineage>
        <taxon>Bacteria</taxon>
        <taxon>Pseudomonadati</taxon>
        <taxon>Pseudomonadota</taxon>
        <taxon>Gammaproteobacteria</taxon>
        <taxon>Enterobacterales</taxon>
        <taxon>Enterobacteriaceae</taxon>
        <taxon>Klebsiella/Raoultella group</taxon>
        <taxon>Klebsiella</taxon>
        <taxon>Klebsiella pneumoniae complex</taxon>
    </lineage>
</organism>
<feature type="chain" id="PRO_1000080581" description="Na(+)-translocating NADH-quinone reductase subunit F">
    <location>
        <begin position="1"/>
        <end position="407"/>
    </location>
</feature>
<feature type="transmembrane region" description="Helical" evidence="1">
    <location>
        <begin position="3"/>
        <end position="23"/>
    </location>
</feature>
<feature type="domain" description="2Fe-2S ferredoxin-type" evidence="1">
    <location>
        <begin position="32"/>
        <end position="126"/>
    </location>
</feature>
<feature type="domain" description="FAD-binding FR-type" evidence="1">
    <location>
        <begin position="129"/>
        <end position="269"/>
    </location>
</feature>
<feature type="binding site" evidence="1">
    <location>
        <position position="69"/>
    </location>
    <ligand>
        <name>[2Fe-2S] cluster</name>
        <dbReference type="ChEBI" id="CHEBI:190135"/>
    </ligand>
</feature>
<feature type="binding site" evidence="1">
    <location>
        <position position="75"/>
    </location>
    <ligand>
        <name>[2Fe-2S] cluster</name>
        <dbReference type="ChEBI" id="CHEBI:190135"/>
    </ligand>
</feature>
<feature type="binding site" evidence="1">
    <location>
        <position position="78"/>
    </location>
    <ligand>
        <name>[2Fe-2S] cluster</name>
        <dbReference type="ChEBI" id="CHEBI:190135"/>
    </ligand>
</feature>
<feature type="binding site" evidence="1">
    <location>
        <position position="110"/>
    </location>
    <ligand>
        <name>[2Fe-2S] cluster</name>
        <dbReference type="ChEBI" id="CHEBI:190135"/>
    </ligand>
</feature>
<feature type="strand" evidence="2">
    <location>
        <begin position="131"/>
        <end position="143"/>
    </location>
</feature>
<feature type="strand" evidence="2">
    <location>
        <begin position="146"/>
        <end position="152"/>
    </location>
</feature>
<feature type="strand" evidence="2">
    <location>
        <begin position="166"/>
        <end position="171"/>
    </location>
</feature>
<feature type="strand" evidence="2">
    <location>
        <begin position="173"/>
        <end position="177"/>
    </location>
</feature>
<feature type="helix" evidence="2">
    <location>
        <begin position="178"/>
        <end position="180"/>
    </location>
</feature>
<feature type="helix" evidence="2">
    <location>
        <begin position="185"/>
        <end position="187"/>
    </location>
</feature>
<feature type="helix" evidence="2">
    <location>
        <begin position="188"/>
        <end position="193"/>
    </location>
</feature>
<feature type="helix" evidence="2">
    <location>
        <begin position="196"/>
        <end position="198"/>
    </location>
</feature>
<feature type="strand" evidence="2">
    <location>
        <begin position="200"/>
        <end position="205"/>
    </location>
</feature>
<feature type="strand" evidence="2">
    <location>
        <begin position="207"/>
        <end position="212"/>
    </location>
</feature>
<feature type="strand" evidence="2">
    <location>
        <begin position="222"/>
        <end position="228"/>
    </location>
</feature>
<feature type="helix" evidence="2">
    <location>
        <begin position="243"/>
        <end position="250"/>
    </location>
</feature>
<feature type="strand" evidence="2">
    <location>
        <begin position="256"/>
        <end position="263"/>
    </location>
</feature>
<feature type="strand" evidence="2">
    <location>
        <begin position="271"/>
        <end position="273"/>
    </location>
</feature>
<feature type="strand" evidence="2">
    <location>
        <begin position="275"/>
        <end position="280"/>
    </location>
</feature>
<feature type="helix" evidence="2">
    <location>
        <begin position="281"/>
        <end position="283"/>
    </location>
</feature>
<feature type="helix" evidence="2">
    <location>
        <begin position="284"/>
        <end position="296"/>
    </location>
</feature>
<feature type="strand" evidence="2">
    <location>
        <begin position="304"/>
        <end position="312"/>
    </location>
</feature>
<feature type="helix" evidence="2">
    <location>
        <begin position="313"/>
        <end position="315"/>
    </location>
</feature>
<feature type="helix" evidence="2">
    <location>
        <begin position="319"/>
        <end position="328"/>
    </location>
</feature>
<feature type="strand" evidence="2">
    <location>
        <begin position="332"/>
        <end position="340"/>
    </location>
</feature>
<feature type="helix" evidence="2">
    <location>
        <begin position="343"/>
        <end position="345"/>
    </location>
</feature>
<feature type="strand" evidence="2">
    <location>
        <begin position="349"/>
        <end position="352"/>
    </location>
</feature>
<feature type="helix" evidence="2">
    <location>
        <begin position="354"/>
        <end position="361"/>
    </location>
</feature>
<feature type="helix" evidence="2">
    <location>
        <begin position="363"/>
        <end position="365"/>
    </location>
</feature>
<feature type="helix" evidence="2">
    <location>
        <begin position="369"/>
        <end position="371"/>
    </location>
</feature>
<feature type="strand" evidence="2">
    <location>
        <begin position="372"/>
        <end position="378"/>
    </location>
</feature>
<feature type="helix" evidence="2">
    <location>
        <begin position="380"/>
        <end position="392"/>
    </location>
</feature>
<feature type="helix" evidence="2">
    <location>
        <begin position="397"/>
        <end position="399"/>
    </location>
</feature>
<feature type="strand" evidence="2">
    <location>
        <begin position="400"/>
        <end position="402"/>
    </location>
</feature>